<proteinExistence type="inferred from homology"/>
<name>RL13_RHOJR</name>
<keyword id="KW-0687">Ribonucleoprotein</keyword>
<keyword id="KW-0689">Ribosomal protein</keyword>
<dbReference type="EMBL" id="CP000431">
    <property type="protein sequence ID" value="ABG97947.1"/>
    <property type="molecule type" value="Genomic_DNA"/>
</dbReference>
<dbReference type="RefSeq" id="WP_005239728.1">
    <property type="nucleotide sequence ID" value="NC_008268.1"/>
</dbReference>
<dbReference type="SMR" id="Q0S3D9"/>
<dbReference type="GeneID" id="69890560"/>
<dbReference type="KEGG" id="rha:RHA1_ro06170"/>
<dbReference type="eggNOG" id="COG0102">
    <property type="taxonomic scope" value="Bacteria"/>
</dbReference>
<dbReference type="HOGENOM" id="CLU_082184_2_2_11"/>
<dbReference type="OrthoDB" id="9801330at2"/>
<dbReference type="Proteomes" id="UP000008710">
    <property type="component" value="Chromosome"/>
</dbReference>
<dbReference type="GO" id="GO:0022625">
    <property type="term" value="C:cytosolic large ribosomal subunit"/>
    <property type="evidence" value="ECO:0007669"/>
    <property type="project" value="TreeGrafter"/>
</dbReference>
<dbReference type="GO" id="GO:0003729">
    <property type="term" value="F:mRNA binding"/>
    <property type="evidence" value="ECO:0007669"/>
    <property type="project" value="TreeGrafter"/>
</dbReference>
<dbReference type="GO" id="GO:0003735">
    <property type="term" value="F:structural constituent of ribosome"/>
    <property type="evidence" value="ECO:0007669"/>
    <property type="project" value="InterPro"/>
</dbReference>
<dbReference type="GO" id="GO:0017148">
    <property type="term" value="P:negative regulation of translation"/>
    <property type="evidence" value="ECO:0007669"/>
    <property type="project" value="TreeGrafter"/>
</dbReference>
<dbReference type="GO" id="GO:0006412">
    <property type="term" value="P:translation"/>
    <property type="evidence" value="ECO:0007669"/>
    <property type="project" value="UniProtKB-UniRule"/>
</dbReference>
<dbReference type="CDD" id="cd00392">
    <property type="entry name" value="Ribosomal_L13"/>
    <property type="match status" value="1"/>
</dbReference>
<dbReference type="FunFam" id="3.90.1180.10:FF:000001">
    <property type="entry name" value="50S ribosomal protein L13"/>
    <property type="match status" value="1"/>
</dbReference>
<dbReference type="Gene3D" id="3.90.1180.10">
    <property type="entry name" value="Ribosomal protein L13"/>
    <property type="match status" value="1"/>
</dbReference>
<dbReference type="HAMAP" id="MF_01366">
    <property type="entry name" value="Ribosomal_uL13"/>
    <property type="match status" value="1"/>
</dbReference>
<dbReference type="InterPro" id="IPR005822">
    <property type="entry name" value="Ribosomal_uL13"/>
</dbReference>
<dbReference type="InterPro" id="IPR005823">
    <property type="entry name" value="Ribosomal_uL13_bac-type"/>
</dbReference>
<dbReference type="InterPro" id="IPR023563">
    <property type="entry name" value="Ribosomal_uL13_CS"/>
</dbReference>
<dbReference type="InterPro" id="IPR036899">
    <property type="entry name" value="Ribosomal_uL13_sf"/>
</dbReference>
<dbReference type="NCBIfam" id="TIGR01066">
    <property type="entry name" value="rplM_bact"/>
    <property type="match status" value="1"/>
</dbReference>
<dbReference type="PANTHER" id="PTHR11545:SF2">
    <property type="entry name" value="LARGE RIBOSOMAL SUBUNIT PROTEIN UL13M"/>
    <property type="match status" value="1"/>
</dbReference>
<dbReference type="PANTHER" id="PTHR11545">
    <property type="entry name" value="RIBOSOMAL PROTEIN L13"/>
    <property type="match status" value="1"/>
</dbReference>
<dbReference type="Pfam" id="PF00572">
    <property type="entry name" value="Ribosomal_L13"/>
    <property type="match status" value="1"/>
</dbReference>
<dbReference type="PIRSF" id="PIRSF002181">
    <property type="entry name" value="Ribosomal_L13"/>
    <property type="match status" value="1"/>
</dbReference>
<dbReference type="SUPFAM" id="SSF52161">
    <property type="entry name" value="Ribosomal protein L13"/>
    <property type="match status" value="1"/>
</dbReference>
<dbReference type="PROSITE" id="PS00783">
    <property type="entry name" value="RIBOSOMAL_L13"/>
    <property type="match status" value="1"/>
</dbReference>
<gene>
    <name evidence="1" type="primary">rplM</name>
    <name type="ordered locus">RHA1_ro06170</name>
</gene>
<sequence length="147" mass="15910">MSTYTPKAGDVTRTWHVIDATDVVLGRLAVQAANLLRGKHKPTFAPHVDGGDFVVIINAEKVAISGNKREGKFLYHHSGHPGGLKSRSVGEVLDKNPDRLVEKAIVGMLPKNKLGRAISSKLKVYAGPNHPHAAQQPVPFEIKQVAQ</sequence>
<reference key="1">
    <citation type="journal article" date="2006" name="Proc. Natl. Acad. Sci. U.S.A.">
        <title>The complete genome of Rhodococcus sp. RHA1 provides insights into a catabolic powerhouse.</title>
        <authorList>
            <person name="McLeod M.P."/>
            <person name="Warren R.L."/>
            <person name="Hsiao W.W.L."/>
            <person name="Araki N."/>
            <person name="Myhre M."/>
            <person name="Fernandes C."/>
            <person name="Miyazawa D."/>
            <person name="Wong W."/>
            <person name="Lillquist A.L."/>
            <person name="Wang D."/>
            <person name="Dosanjh M."/>
            <person name="Hara H."/>
            <person name="Petrescu A."/>
            <person name="Morin R.D."/>
            <person name="Yang G."/>
            <person name="Stott J.M."/>
            <person name="Schein J.E."/>
            <person name="Shin H."/>
            <person name="Smailus D."/>
            <person name="Siddiqui A.S."/>
            <person name="Marra M.A."/>
            <person name="Jones S.J.M."/>
            <person name="Holt R."/>
            <person name="Brinkman F.S.L."/>
            <person name="Miyauchi K."/>
            <person name="Fukuda M."/>
            <person name="Davies J.E."/>
            <person name="Mohn W.W."/>
            <person name="Eltis L.D."/>
        </authorList>
    </citation>
    <scope>NUCLEOTIDE SEQUENCE [LARGE SCALE GENOMIC DNA]</scope>
    <source>
        <strain>RHA1</strain>
    </source>
</reference>
<feature type="chain" id="PRO_1000055458" description="Large ribosomal subunit protein uL13">
    <location>
        <begin position="1"/>
        <end position="147"/>
    </location>
</feature>
<protein>
    <recommendedName>
        <fullName evidence="1">Large ribosomal subunit protein uL13</fullName>
    </recommendedName>
    <alternativeName>
        <fullName evidence="2">50S ribosomal protein L13</fullName>
    </alternativeName>
</protein>
<organism>
    <name type="scientific">Rhodococcus jostii (strain RHA1)</name>
    <dbReference type="NCBI Taxonomy" id="101510"/>
    <lineage>
        <taxon>Bacteria</taxon>
        <taxon>Bacillati</taxon>
        <taxon>Actinomycetota</taxon>
        <taxon>Actinomycetes</taxon>
        <taxon>Mycobacteriales</taxon>
        <taxon>Nocardiaceae</taxon>
        <taxon>Rhodococcus</taxon>
    </lineage>
</organism>
<evidence type="ECO:0000255" key="1">
    <source>
        <dbReference type="HAMAP-Rule" id="MF_01366"/>
    </source>
</evidence>
<evidence type="ECO:0000305" key="2"/>
<comment type="function">
    <text evidence="1">This protein is one of the early assembly proteins of the 50S ribosomal subunit, although it is not seen to bind rRNA by itself. It is important during the early stages of 50S assembly.</text>
</comment>
<comment type="subunit">
    <text evidence="1">Part of the 50S ribosomal subunit.</text>
</comment>
<comment type="similarity">
    <text evidence="1">Belongs to the universal ribosomal protein uL13 family.</text>
</comment>
<accession>Q0S3D9</accession>